<keyword id="KW-0028">Amino-acid biosynthesis</keyword>
<keyword id="KW-0067">ATP-binding</keyword>
<keyword id="KW-0418">Kinase</keyword>
<keyword id="KW-0547">Nucleotide-binding</keyword>
<keyword id="KW-0791">Threonine biosynthesis</keyword>
<keyword id="KW-0808">Transferase</keyword>
<name>KHSE_CUPTR</name>
<feature type="chain" id="PRO_1000115431" description="Homoserine kinase">
    <location>
        <begin position="1"/>
        <end position="334"/>
    </location>
</feature>
<evidence type="ECO:0000255" key="1">
    <source>
        <dbReference type="HAMAP-Rule" id="MF_00301"/>
    </source>
</evidence>
<sequence length="334" mass="38131">MAVFTTVSQDEIARWLLDFDLGEVRELRGIASGIENSNFFLTMEHEGQTRQYVLTIFERLSFTQLPYYLHLMAHLAERGIRVPAPIPARDGEILRPLKGKPATIVTRLPGASQLAPDAQHCAEVGDMLARMHLAGADYPRRQPNLRSLPWWQQTEREILPFLDAGQRALLQREIAHQAAFFASAAYASLGEGPCHCDLFRDNALFEEDASGRHRLGGFFDFYFAGNDKWLFDVAVTVNDWCIDLATGELDAERAQALLRAYHAVRPLTETEAAHWQDMLRAGALRFWVSRLWDFYLPREADMLQPHDPTHFERILRRRLDAQPANPESAPLPWI</sequence>
<proteinExistence type="inferred from homology"/>
<reference key="1">
    <citation type="journal article" date="2008" name="Genome Res.">
        <title>Genome sequence of the beta-rhizobium Cupriavidus taiwanensis and comparative genomics of rhizobia.</title>
        <authorList>
            <person name="Amadou C."/>
            <person name="Pascal G."/>
            <person name="Mangenot S."/>
            <person name="Glew M."/>
            <person name="Bontemps C."/>
            <person name="Capela D."/>
            <person name="Carrere S."/>
            <person name="Cruveiller S."/>
            <person name="Dossat C."/>
            <person name="Lajus A."/>
            <person name="Marchetti M."/>
            <person name="Poinsot V."/>
            <person name="Rouy Z."/>
            <person name="Servin B."/>
            <person name="Saad M."/>
            <person name="Schenowitz C."/>
            <person name="Barbe V."/>
            <person name="Batut J."/>
            <person name="Medigue C."/>
            <person name="Masson-Boivin C."/>
        </authorList>
    </citation>
    <scope>NUCLEOTIDE SEQUENCE [LARGE SCALE GENOMIC DNA]</scope>
    <source>
        <strain>DSM 17343 / BCRC 17206 / CCUG 44338 / CIP 107171 / LMG 19424 / R1</strain>
    </source>
</reference>
<accession>B3R5F6</accession>
<protein>
    <recommendedName>
        <fullName evidence="1">Homoserine kinase</fullName>
        <shortName evidence="1">HK</shortName>
        <shortName evidence="1">HSK</shortName>
        <ecNumber evidence="1">2.7.1.39</ecNumber>
    </recommendedName>
</protein>
<organism>
    <name type="scientific">Cupriavidus taiwanensis (strain DSM 17343 / BCRC 17206 / CCUG 44338 / CIP 107171 / LMG 19424 / R1)</name>
    <name type="common">Ralstonia taiwanensis (strain LMG 19424)</name>
    <dbReference type="NCBI Taxonomy" id="977880"/>
    <lineage>
        <taxon>Bacteria</taxon>
        <taxon>Pseudomonadati</taxon>
        <taxon>Pseudomonadota</taxon>
        <taxon>Betaproteobacteria</taxon>
        <taxon>Burkholderiales</taxon>
        <taxon>Burkholderiaceae</taxon>
        <taxon>Cupriavidus</taxon>
    </lineage>
</organism>
<dbReference type="EC" id="2.7.1.39" evidence="1"/>
<dbReference type="EMBL" id="CU633749">
    <property type="protein sequence ID" value="CAQ70181.1"/>
    <property type="molecule type" value="Genomic_DNA"/>
</dbReference>
<dbReference type="RefSeq" id="WP_012353486.1">
    <property type="nucleotide sequence ID" value="NC_010528.1"/>
</dbReference>
<dbReference type="SMR" id="B3R5F6"/>
<dbReference type="GeneID" id="29762606"/>
<dbReference type="KEGG" id="cti:RALTA_A2247"/>
<dbReference type="eggNOG" id="COG2334">
    <property type="taxonomic scope" value="Bacteria"/>
</dbReference>
<dbReference type="HOGENOM" id="CLU_053300_0_0_4"/>
<dbReference type="BioCyc" id="CTAI977880:RALTA_RS10895-MONOMER"/>
<dbReference type="UniPathway" id="UPA00050">
    <property type="reaction ID" value="UER00064"/>
</dbReference>
<dbReference type="Proteomes" id="UP000001692">
    <property type="component" value="Chromosome 1"/>
</dbReference>
<dbReference type="GO" id="GO:0005524">
    <property type="term" value="F:ATP binding"/>
    <property type="evidence" value="ECO:0007669"/>
    <property type="project" value="UniProtKB-KW"/>
</dbReference>
<dbReference type="GO" id="GO:0004413">
    <property type="term" value="F:homoserine kinase activity"/>
    <property type="evidence" value="ECO:0007669"/>
    <property type="project" value="UniProtKB-UniRule"/>
</dbReference>
<dbReference type="GO" id="GO:0009088">
    <property type="term" value="P:threonine biosynthetic process"/>
    <property type="evidence" value="ECO:0007669"/>
    <property type="project" value="UniProtKB-UniRule"/>
</dbReference>
<dbReference type="CDD" id="cd05153">
    <property type="entry name" value="HomoserineK_II"/>
    <property type="match status" value="1"/>
</dbReference>
<dbReference type="Gene3D" id="3.90.1200.10">
    <property type="match status" value="1"/>
</dbReference>
<dbReference type="Gene3D" id="3.30.200.20">
    <property type="entry name" value="Phosphorylase Kinase, domain 1"/>
    <property type="match status" value="1"/>
</dbReference>
<dbReference type="HAMAP" id="MF_00301">
    <property type="entry name" value="Homoser_kinase_2"/>
    <property type="match status" value="1"/>
</dbReference>
<dbReference type="InterPro" id="IPR002575">
    <property type="entry name" value="Aminoglycoside_PTrfase"/>
</dbReference>
<dbReference type="InterPro" id="IPR005280">
    <property type="entry name" value="Homoserine_kinase_II"/>
</dbReference>
<dbReference type="InterPro" id="IPR011009">
    <property type="entry name" value="Kinase-like_dom_sf"/>
</dbReference>
<dbReference type="InterPro" id="IPR050249">
    <property type="entry name" value="Pseudomonas-type_ThrB"/>
</dbReference>
<dbReference type="NCBIfam" id="NF003558">
    <property type="entry name" value="PRK05231.1"/>
    <property type="match status" value="1"/>
</dbReference>
<dbReference type="NCBIfam" id="TIGR00938">
    <property type="entry name" value="thrB_alt"/>
    <property type="match status" value="1"/>
</dbReference>
<dbReference type="PANTHER" id="PTHR21064:SF6">
    <property type="entry name" value="AMINOGLYCOSIDE PHOSPHOTRANSFERASE DOMAIN-CONTAINING PROTEIN"/>
    <property type="match status" value="1"/>
</dbReference>
<dbReference type="PANTHER" id="PTHR21064">
    <property type="entry name" value="AMINOGLYCOSIDE PHOSPHOTRANSFERASE DOMAIN-CONTAINING PROTEIN-RELATED"/>
    <property type="match status" value="1"/>
</dbReference>
<dbReference type="Pfam" id="PF01636">
    <property type="entry name" value="APH"/>
    <property type="match status" value="1"/>
</dbReference>
<dbReference type="SUPFAM" id="SSF56112">
    <property type="entry name" value="Protein kinase-like (PK-like)"/>
    <property type="match status" value="1"/>
</dbReference>
<comment type="catalytic activity">
    <reaction evidence="1">
        <text>L-homoserine + ATP = O-phospho-L-homoserine + ADP + H(+)</text>
        <dbReference type="Rhea" id="RHEA:13985"/>
        <dbReference type="ChEBI" id="CHEBI:15378"/>
        <dbReference type="ChEBI" id="CHEBI:30616"/>
        <dbReference type="ChEBI" id="CHEBI:57476"/>
        <dbReference type="ChEBI" id="CHEBI:57590"/>
        <dbReference type="ChEBI" id="CHEBI:456216"/>
        <dbReference type="EC" id="2.7.1.39"/>
    </reaction>
</comment>
<comment type="pathway">
    <text evidence="1">Amino-acid biosynthesis; L-threonine biosynthesis; L-threonine from L-aspartate: step 4/5.</text>
</comment>
<comment type="similarity">
    <text evidence="1">Belongs to the pseudomonas-type ThrB family.</text>
</comment>
<gene>
    <name evidence="1" type="primary">thrB</name>
    <name type="ordered locus">RALTA_A2247</name>
</gene>